<accession>Q0T624</accession>
<reference key="1">
    <citation type="journal article" date="2006" name="BMC Genomics">
        <title>Complete genome sequence of Shigella flexneri 5b and comparison with Shigella flexneri 2a.</title>
        <authorList>
            <person name="Nie H."/>
            <person name="Yang F."/>
            <person name="Zhang X."/>
            <person name="Yang J."/>
            <person name="Chen L."/>
            <person name="Wang J."/>
            <person name="Xiong Z."/>
            <person name="Peng J."/>
            <person name="Sun L."/>
            <person name="Dong J."/>
            <person name="Xue Y."/>
            <person name="Xu X."/>
            <person name="Chen S."/>
            <person name="Yao Z."/>
            <person name="Shen Y."/>
            <person name="Jin Q."/>
        </authorList>
    </citation>
    <scope>NUCLEOTIDE SEQUENCE [LARGE SCALE GENOMIC DNA]</scope>
    <source>
        <strain>8401</strain>
    </source>
</reference>
<gene>
    <name evidence="1" type="primary">rutC</name>
    <name type="ordered locus">SFV_1022</name>
</gene>
<name>RUTC_SHIF8</name>
<feature type="chain" id="PRO_0000402767" description="3-aminoacrylate deaminase RutC">
    <location>
        <begin position="1"/>
        <end position="128"/>
    </location>
</feature>
<evidence type="ECO:0000255" key="1">
    <source>
        <dbReference type="HAMAP-Rule" id="MF_00831"/>
    </source>
</evidence>
<keyword id="KW-0378">Hydrolase</keyword>
<dbReference type="EC" id="3.5.-.-" evidence="1"/>
<dbReference type="EMBL" id="CP000266">
    <property type="protein sequence ID" value="ABF03241.1"/>
    <property type="molecule type" value="Genomic_DNA"/>
</dbReference>
<dbReference type="RefSeq" id="WP_001126782.1">
    <property type="nucleotide sequence ID" value="NC_008258.1"/>
</dbReference>
<dbReference type="SMR" id="Q0T624"/>
<dbReference type="KEGG" id="sfv:SFV_1022"/>
<dbReference type="HOGENOM" id="CLU_100715_7_3_6"/>
<dbReference type="Proteomes" id="UP000000659">
    <property type="component" value="Chromosome"/>
</dbReference>
<dbReference type="GO" id="GO:0005829">
    <property type="term" value="C:cytosol"/>
    <property type="evidence" value="ECO:0007669"/>
    <property type="project" value="TreeGrafter"/>
</dbReference>
<dbReference type="GO" id="GO:0019239">
    <property type="term" value="F:deaminase activity"/>
    <property type="evidence" value="ECO:0007669"/>
    <property type="project" value="TreeGrafter"/>
</dbReference>
<dbReference type="GO" id="GO:0019740">
    <property type="term" value="P:nitrogen utilization"/>
    <property type="evidence" value="ECO:0007669"/>
    <property type="project" value="UniProtKB-UniRule"/>
</dbReference>
<dbReference type="GO" id="GO:0006212">
    <property type="term" value="P:uracil catabolic process"/>
    <property type="evidence" value="ECO:0007669"/>
    <property type="project" value="UniProtKB-UniRule"/>
</dbReference>
<dbReference type="CDD" id="cd00448">
    <property type="entry name" value="YjgF_YER057c_UK114_family"/>
    <property type="match status" value="1"/>
</dbReference>
<dbReference type="Gene3D" id="3.30.1330.40">
    <property type="entry name" value="RutC-like"/>
    <property type="match status" value="1"/>
</dbReference>
<dbReference type="HAMAP" id="MF_00831">
    <property type="entry name" value="RutC"/>
    <property type="match status" value="1"/>
</dbReference>
<dbReference type="InterPro" id="IPR019897">
    <property type="entry name" value="RidA_CS"/>
</dbReference>
<dbReference type="InterPro" id="IPR019898">
    <property type="entry name" value="RutC"/>
</dbReference>
<dbReference type="InterPro" id="IPR035959">
    <property type="entry name" value="RutC-like_sf"/>
</dbReference>
<dbReference type="InterPro" id="IPR006175">
    <property type="entry name" value="YjgF/YER057c/UK114"/>
</dbReference>
<dbReference type="NCBIfam" id="TIGR03610">
    <property type="entry name" value="RutC"/>
    <property type="match status" value="1"/>
</dbReference>
<dbReference type="PANTHER" id="PTHR11803">
    <property type="entry name" value="2-IMINOBUTANOATE/2-IMINOPROPANOATE DEAMINASE RIDA"/>
    <property type="match status" value="1"/>
</dbReference>
<dbReference type="PANTHER" id="PTHR11803:SF58">
    <property type="entry name" value="PROTEIN HMF1-RELATED"/>
    <property type="match status" value="1"/>
</dbReference>
<dbReference type="Pfam" id="PF01042">
    <property type="entry name" value="Ribonuc_L-PSP"/>
    <property type="match status" value="1"/>
</dbReference>
<dbReference type="SUPFAM" id="SSF55298">
    <property type="entry name" value="YjgF-like"/>
    <property type="match status" value="1"/>
</dbReference>
<dbReference type="PROSITE" id="PS01094">
    <property type="entry name" value="UPF0076"/>
    <property type="match status" value="1"/>
</dbReference>
<protein>
    <recommendedName>
        <fullName evidence="1">3-aminoacrylate deaminase RutC</fullName>
        <shortName evidence="1">3-AA deaminase</shortName>
        <ecNumber evidence="1">3.5.-.-</ecNumber>
    </recommendedName>
</protein>
<proteinExistence type="inferred from homology"/>
<comment type="function">
    <text evidence="1">Involved in pyrimidine catabolism. Catalyzes the deamination of 3-aminoacrylate to malonic semialdehyde, a reaction that can also occur spontaneously. RutC may facilitate the reaction and modulate the metabolic fitness, rather than catalyzing essential functions.</text>
</comment>
<comment type="catalytic activity">
    <reaction evidence="1">
        <text>(Z)-3-aminoacrylate + H2O + H(+) = 3-oxopropanoate + NH4(+)</text>
        <dbReference type="Rhea" id="RHEA:34947"/>
        <dbReference type="ChEBI" id="CHEBI:15377"/>
        <dbReference type="ChEBI" id="CHEBI:15378"/>
        <dbReference type="ChEBI" id="CHEBI:28938"/>
        <dbReference type="ChEBI" id="CHEBI:33190"/>
        <dbReference type="ChEBI" id="CHEBI:59894"/>
    </reaction>
</comment>
<comment type="subunit">
    <text evidence="1">Homotrimer.</text>
</comment>
<comment type="similarity">
    <text evidence="1">Belongs to the RutC family.</text>
</comment>
<sequence length="128" mass="13823">MPKSVIIPAGSSAPLAPFVPGTLADGVVYVSGTLAFDQHNNVLFADDPKAQTRHVLETIRKVIETAGGTMADVTFNSIFITDWKNYAAINEIYAEFFPGDKPARFYIQCGLVKPDALVEIATIAHIAK</sequence>
<organism>
    <name type="scientific">Shigella flexneri serotype 5b (strain 8401)</name>
    <dbReference type="NCBI Taxonomy" id="373384"/>
    <lineage>
        <taxon>Bacteria</taxon>
        <taxon>Pseudomonadati</taxon>
        <taxon>Pseudomonadota</taxon>
        <taxon>Gammaproteobacteria</taxon>
        <taxon>Enterobacterales</taxon>
        <taxon>Enterobacteriaceae</taxon>
        <taxon>Shigella</taxon>
    </lineage>
</organism>